<accession>B3EMI1</accession>
<evidence type="ECO:0000255" key="1">
    <source>
        <dbReference type="HAMAP-Rule" id="MF_01114"/>
    </source>
</evidence>
<sequence length="151" mass="17650">MADTDDKKAFDLAIRLLGEREHSRKEIITKLERRKFSEAAIDKTLERLDQLGLIDDRSFAEHFVGSRSRKKPSGKYKLRYELFQKGISETIIDEILSDYDSSAHCLDAAMKKFPFLKGDDHYKRKKLYAFLANRGFDSHSIRETLDQIFRS</sequence>
<reference key="1">
    <citation type="submission" date="2008-06" db="EMBL/GenBank/DDBJ databases">
        <title>Complete sequence of Chlorobium phaeobacteroides BS1.</title>
        <authorList>
            <consortium name="US DOE Joint Genome Institute"/>
            <person name="Lucas S."/>
            <person name="Copeland A."/>
            <person name="Lapidus A."/>
            <person name="Glavina del Rio T."/>
            <person name="Dalin E."/>
            <person name="Tice H."/>
            <person name="Bruce D."/>
            <person name="Goodwin L."/>
            <person name="Pitluck S."/>
            <person name="Schmutz J."/>
            <person name="Larimer F."/>
            <person name="Land M."/>
            <person name="Hauser L."/>
            <person name="Kyrpides N."/>
            <person name="Ovchinnikova G."/>
            <person name="Li T."/>
            <person name="Liu Z."/>
            <person name="Zhao F."/>
            <person name="Overmann J."/>
            <person name="Bryant D.A."/>
            <person name="Richardson P."/>
        </authorList>
    </citation>
    <scope>NUCLEOTIDE SEQUENCE [LARGE SCALE GENOMIC DNA]</scope>
    <source>
        <strain>BS1</strain>
    </source>
</reference>
<protein>
    <recommendedName>
        <fullName evidence="1">Regulatory protein RecX</fullName>
    </recommendedName>
</protein>
<proteinExistence type="inferred from homology"/>
<dbReference type="EMBL" id="CP001101">
    <property type="protein sequence ID" value="ACE04920.1"/>
    <property type="molecule type" value="Genomic_DNA"/>
</dbReference>
<dbReference type="SMR" id="B3EMI1"/>
<dbReference type="STRING" id="331678.Cphamn1_2010"/>
<dbReference type="KEGG" id="cpb:Cphamn1_2010"/>
<dbReference type="eggNOG" id="COG2137">
    <property type="taxonomic scope" value="Bacteria"/>
</dbReference>
<dbReference type="HOGENOM" id="CLU_066607_3_3_10"/>
<dbReference type="OrthoDB" id="597927at2"/>
<dbReference type="GO" id="GO:0005737">
    <property type="term" value="C:cytoplasm"/>
    <property type="evidence" value="ECO:0007669"/>
    <property type="project" value="UniProtKB-SubCell"/>
</dbReference>
<dbReference type="GO" id="GO:0006282">
    <property type="term" value="P:regulation of DNA repair"/>
    <property type="evidence" value="ECO:0007669"/>
    <property type="project" value="UniProtKB-UniRule"/>
</dbReference>
<dbReference type="Gene3D" id="1.10.10.10">
    <property type="entry name" value="Winged helix-like DNA-binding domain superfamily/Winged helix DNA-binding domain"/>
    <property type="match status" value="3"/>
</dbReference>
<dbReference type="HAMAP" id="MF_01114">
    <property type="entry name" value="RecX"/>
    <property type="match status" value="1"/>
</dbReference>
<dbReference type="InterPro" id="IPR053926">
    <property type="entry name" value="RecX_HTH_1st"/>
</dbReference>
<dbReference type="InterPro" id="IPR053924">
    <property type="entry name" value="RecX_HTH_2nd"/>
</dbReference>
<dbReference type="InterPro" id="IPR053925">
    <property type="entry name" value="RecX_HTH_3rd"/>
</dbReference>
<dbReference type="InterPro" id="IPR003783">
    <property type="entry name" value="Regulatory_RecX"/>
</dbReference>
<dbReference type="InterPro" id="IPR036388">
    <property type="entry name" value="WH-like_DNA-bd_sf"/>
</dbReference>
<dbReference type="PANTHER" id="PTHR33602">
    <property type="entry name" value="REGULATORY PROTEIN RECX FAMILY PROTEIN"/>
    <property type="match status" value="1"/>
</dbReference>
<dbReference type="PANTHER" id="PTHR33602:SF1">
    <property type="entry name" value="REGULATORY PROTEIN RECX FAMILY PROTEIN"/>
    <property type="match status" value="1"/>
</dbReference>
<dbReference type="Pfam" id="PF21982">
    <property type="entry name" value="RecX_HTH1"/>
    <property type="match status" value="1"/>
</dbReference>
<dbReference type="Pfam" id="PF02631">
    <property type="entry name" value="RecX_HTH2"/>
    <property type="match status" value="1"/>
</dbReference>
<dbReference type="Pfam" id="PF21981">
    <property type="entry name" value="RecX_HTH3"/>
    <property type="match status" value="1"/>
</dbReference>
<comment type="function">
    <text evidence="1">Modulates RecA activity.</text>
</comment>
<comment type="subcellular location">
    <subcellularLocation>
        <location evidence="1">Cytoplasm</location>
    </subcellularLocation>
</comment>
<comment type="similarity">
    <text evidence="1">Belongs to the RecX family.</text>
</comment>
<keyword id="KW-0963">Cytoplasm</keyword>
<name>RECX_CHLPB</name>
<gene>
    <name evidence="1" type="primary">recX</name>
    <name type="ordered locus">Cphamn1_2010</name>
</gene>
<feature type="chain" id="PRO_1000137157" description="Regulatory protein RecX">
    <location>
        <begin position="1"/>
        <end position="151"/>
    </location>
</feature>
<organism>
    <name type="scientific">Chlorobium phaeobacteroides (strain BS1)</name>
    <dbReference type="NCBI Taxonomy" id="331678"/>
    <lineage>
        <taxon>Bacteria</taxon>
        <taxon>Pseudomonadati</taxon>
        <taxon>Chlorobiota</taxon>
        <taxon>Chlorobiia</taxon>
        <taxon>Chlorobiales</taxon>
        <taxon>Chlorobiaceae</taxon>
        <taxon>Chlorobium/Pelodictyon group</taxon>
        <taxon>Chlorobium</taxon>
    </lineage>
</organism>